<evidence type="ECO:0000250" key="1"/>
<evidence type="ECO:0000250" key="2">
    <source>
        <dbReference type="UniProtKB" id="Q13291"/>
    </source>
</evidence>
<evidence type="ECO:0000250" key="3">
    <source>
        <dbReference type="UniProtKB" id="Q96DU3"/>
    </source>
</evidence>
<evidence type="ECO:0000255" key="4"/>
<evidence type="ECO:0000255" key="5">
    <source>
        <dbReference type="PROSITE-ProRule" id="PRU00114"/>
    </source>
</evidence>
<evidence type="ECO:0000256" key="6">
    <source>
        <dbReference type="SAM" id="MobiDB-lite"/>
    </source>
</evidence>
<evidence type="ECO:0000269" key="7">
    <source>
    </source>
</evidence>
<evidence type="ECO:0000269" key="8">
    <source>
    </source>
</evidence>
<evidence type="ECO:0000269" key="9">
    <source>
    </source>
</evidence>
<evidence type="ECO:0000269" key="10">
    <source>
    </source>
</evidence>
<evidence type="ECO:0000269" key="11">
    <source>
    </source>
</evidence>
<evidence type="ECO:0000269" key="12">
    <source>
    </source>
</evidence>
<evidence type="ECO:0000303" key="13">
    <source>
    </source>
</evidence>
<evidence type="ECO:0000303" key="14">
    <source>
    </source>
</evidence>
<evidence type="ECO:0000305" key="15"/>
<comment type="function">
    <text evidence="3 7 8 9 10 11 12">Self-ligand receptor of the signaling lymphocytic activation molecule (SLAM) family. SLAM receptors triggered by homo- or heterotypic cell-cell interactions are modulating the activation and differentiation of a wide variety of immune cells and thus are involved in the regulation and interconnection of both innate and adaptive immune response. Activities are controlled by presence or absence of small cytoplasmic adapter proteins, SH2D1A/SAP and/or SH2D1B/EAT-2 (PubMed:19648922). Triggers cytolytic activity only in natural killer cells (NK) expressing high surface densities of natural cytotoxicity receptors (By similarity). Positive signaling in NK cells implicates phosphorylation of VAV1. NK cell activation seems to depend on SH2D1B and not on SH2D1A (By similarity). In conjunction with SLAMF1 controls the transition between positive selection and the subsequent expansion and differentiation of the thymocytic natural killer T (NKT) cell lineage (PubMed:18031695). Promotes T cell differentiation into a helper T-cell Th17 phenotype leading to increased IL-17 secretion; the costimulatory activity requires SH2D1A (By similarity). Promotes recruitment of RORC to the IL-17 promoter (By similarity). In conjunction with SLAMF1 and CD84/SLAMF5 may be a negative regulator of the humoral immune response (PubMed:25926831). In the absence of SH2D1A/SAP can transmit negative signals to CD4(+) T-cells and NKT cells. Negatively regulates germinal center formation by inhibiting T-cell:B-cell adhesion; the function probably implicates increased association with PTPN6/SHP-1 via ITSMs in absence of SH2D1A/SAP (PubMed:22683125). However, reported to mediated T-cell adhesion, to participate in stable T-cell:B-cell interactions and to be involved in maintaining B-cell tolerance in germinal centers and in preventing autoimmunity (PubMed:20153220, PubMed:25801429). Involved in regulation of autoimmunity. Isoform 3 may be suppressor of pathogenic T-cell proliferation (PubMed:21422172).</text>
</comment>
<comment type="subunit">
    <text evidence="1">Homodimer. Interacts with PTN6 and, upon phosphorylation, with PTN11 and SH2D1A/SAP (By similarity).</text>
</comment>
<comment type="subcellular location">
    <subcellularLocation>
        <location evidence="15">Cell membrane</location>
        <topology evidence="15">Single-pass type I membrane protein</topology>
    </subcellularLocation>
</comment>
<comment type="alternative products">
    <event type="alternative splicing"/>
    <isoform>
        <id>Q9ET39-1</id>
        <name>1</name>
        <name>Ly108s</name>
        <sequence type="displayed"/>
    </isoform>
    <isoform>
        <id>Q9ET39-2</id>
        <name>2</name>
        <name>Ly108l</name>
        <sequence type="described" ref="VSP_010404 VSP_010405"/>
    </isoform>
    <isoform>
        <id>Q9ET39-3</id>
        <name>3</name>
        <name>Ly108-H1</name>
        <sequence type="described" ref="VSP_058034"/>
    </isoform>
</comment>
<comment type="tissue specificity">
    <text evidence="10">Expressed on hematopoietic cells. Isoform 3 is expressed in thymocytes and B lymphocytes of C57Bl/6 strain.</text>
</comment>
<comment type="domain">
    <text evidence="2">The ITSMs (immunoreceptor tyrosine-based switch motifs) with the consensus sequence T-X-Y-X-X-[VI] present in SLAM family receptors have overlapping specificity for activating and inhibitory SH2 domain-containing binding partners. Especially they mediate the interaction with the SH2 domain of SH2D1A and SH2D1B. A 'two-out-of-three-pronged' mechanism is proposed involving threonine (position -2), phosphorylated tyrosine (position 0) and valine/isoleucine (position +3).</text>
</comment>
<comment type="PTM">
    <text evidence="1">Phosphorylated.</text>
</comment>
<comment type="miscellaneous">
    <text evidence="10">Isoform 3 ameliorates spontaneous development in a systemic lupus erythematosus transfer model.</text>
</comment>
<comment type="miscellaneous">
    <molecule>Isoform 3</molecule>
    <text evidence="10">Found in Slamf-haplotype 1 mice such as C557Bl/6 but not in Slamf-haplotype 2 strains including 129, Balb/c and NOD.</text>
</comment>
<name>SLAF6_MOUSE</name>
<feature type="signal peptide" evidence="4">
    <location>
        <begin position="1"/>
        <end position="30"/>
    </location>
</feature>
<feature type="chain" id="PRO_0000014962" description="SLAM family member 6">
    <location>
        <begin position="31"/>
        <end position="351"/>
    </location>
</feature>
<feature type="topological domain" description="Extracellular" evidence="4">
    <location>
        <begin position="31"/>
        <end position="239"/>
    </location>
</feature>
<feature type="transmembrane region" description="Helical" evidence="4">
    <location>
        <begin position="240"/>
        <end position="262"/>
    </location>
</feature>
<feature type="topological domain" description="Cytoplasmic" evidence="4">
    <location>
        <begin position="263"/>
        <end position="351"/>
    </location>
</feature>
<feature type="domain" description="Ig-like V-type">
    <location>
        <begin position="36"/>
        <end position="130"/>
    </location>
</feature>
<feature type="domain" description="Ig-like C2-type">
    <location>
        <begin position="147"/>
        <end position="210"/>
    </location>
</feature>
<feature type="region of interest" description="Disordered" evidence="6">
    <location>
        <begin position="272"/>
        <end position="295"/>
    </location>
</feature>
<feature type="short sequence motif" description="ITSM 1" evidence="2">
    <location>
        <begin position="293"/>
        <end position="298"/>
    </location>
</feature>
<feature type="short sequence motif" description="ITSM 2" evidence="2">
    <location>
        <begin position="317"/>
        <end position="322"/>
    </location>
</feature>
<feature type="modified residue" description="Phosphotyrosine" evidence="3">
    <location>
        <position position="319"/>
    </location>
</feature>
<feature type="glycosylation site" description="N-linked (GlcNAc...) asparagine" evidence="4">
    <location>
        <position position="82"/>
    </location>
</feature>
<feature type="glycosylation site" description="N-linked (GlcNAc...) asparagine" evidence="4">
    <location>
        <position position="101"/>
    </location>
</feature>
<feature type="glycosylation site" description="N-linked (GlcNAc...) asparagine" evidence="4">
    <location>
        <position position="112"/>
    </location>
</feature>
<feature type="glycosylation site" description="N-linked (GlcNAc...) asparagine" evidence="4">
    <location>
        <position position="152"/>
    </location>
</feature>
<feature type="glycosylation site" description="N-linked (GlcNAc...) asparagine" evidence="4">
    <location>
        <position position="159"/>
    </location>
</feature>
<feature type="glycosylation site" description="N-linked (GlcNAc...) asparagine" evidence="4">
    <location>
        <position position="172"/>
    </location>
</feature>
<feature type="glycosylation site" description="N-linked (GlcNAc...) asparagine" evidence="4">
    <location>
        <position position="186"/>
    </location>
</feature>
<feature type="glycosylation site" description="N-linked (GlcNAc...) asparagine" evidence="4">
    <location>
        <position position="193"/>
    </location>
</feature>
<feature type="glycosylation site" description="N-linked (GlcNAc...) asparagine" evidence="4">
    <location>
        <position position="218"/>
    </location>
</feature>
<feature type="disulfide bond" evidence="5">
    <location>
        <begin position="162"/>
        <end position="229"/>
    </location>
</feature>
<feature type="disulfide bond" evidence="5">
    <location>
        <begin position="168"/>
        <end position="210"/>
    </location>
</feature>
<feature type="splice variant" id="VSP_058034" description="In isoform 3." evidence="14">
    <location>
        <begin position="305"/>
        <end position="328"/>
    </location>
</feature>
<feature type="splice variant" id="VSP_010404" description="In isoform 2." evidence="13">
    <original>ETVA</original>
    <variation>AEYS</variation>
    <location>
        <begin position="328"/>
        <end position="331"/>
    </location>
</feature>
<feature type="splice variant" id="VSP_010405" description="In isoform 2." evidence="13">
    <location>
        <begin position="332"/>
        <end position="351"/>
    </location>
</feature>
<feature type="mutagenesis site" description="Decreases inhibitory signaling in germinal center formation (absence of SH2D1A/SAP); when associated with F-319 and F-349." evidence="11">
    <original>Y</original>
    <variation>F</variation>
    <location>
        <position position="295"/>
    </location>
</feature>
<feature type="mutagenesis site" description="Strong inhibitory signaling in germinal center formation (absence of SH2D1A/SAP); when associated with F-335 and F-349." evidence="11">
    <original>Y</original>
    <variation>F</variation>
    <location>
        <position position="295"/>
    </location>
</feature>
<feature type="mutagenesis site" description="Decreases inhibitory signaling in germinal center formation (absence of SH2D1A/SAP); when associated with F-295 and F-349." evidence="11">
    <original>Y</original>
    <variation>F</variation>
    <location>
        <position position="319"/>
    </location>
</feature>
<feature type="mutagenesis site" description="Strong inhibitory signaling in germinal center formation (absence of SH2D1A/SAP); when associated with F-335 and F-349." evidence="11">
    <original>Y</original>
    <variation>F</variation>
    <location>
        <position position="319"/>
    </location>
</feature>
<feature type="mutagenesis site" description="Strong inhibitory signaling in germinal center formation (absence of SH2D1A/SAP); when associated with F-295 and F-349." evidence="11">
    <original>Y</original>
    <variation>F</variation>
    <location>
        <position position="335"/>
    </location>
</feature>
<feature type="mutagenesis site" description="Strong inhibitory signaling in germinal center formation (absence of SH2D1A/SAP); when associated with F-319 and F-349." evidence="11">
    <original>Y</original>
    <variation>F</variation>
    <location>
        <position position="335"/>
    </location>
</feature>
<feature type="mutagenesis site" description="Decreases inhibitory signaling in germinal center formation (absence of SH2D1A/SAP); when associated with F-295 and F-319." evidence="11">
    <original>Y</original>
    <variation>F</variation>
    <location>
        <position position="349"/>
    </location>
</feature>
<feature type="mutagenesis site" description="Strong inhibitory signaling in germinal center formation (absence of SH2D1A/SAP); when associated with F-295 and F-335." evidence="11">
    <original>Y</original>
    <variation>F</variation>
    <location>
        <position position="349"/>
    </location>
</feature>
<feature type="mutagenesis site" description="Strong inhibitory signaling in germinal center formation (absence of SH2D1A/SAP); when associated with F-319 and F-335." evidence="11">
    <original>Y</original>
    <variation>F</variation>
    <location>
        <position position="349"/>
    </location>
</feature>
<keyword id="KW-1064">Adaptive immunity</keyword>
<keyword id="KW-0025">Alternative splicing</keyword>
<keyword id="KW-1003">Cell membrane</keyword>
<keyword id="KW-1015">Disulfide bond</keyword>
<keyword id="KW-0325">Glycoprotein</keyword>
<keyword id="KW-0391">Immunity</keyword>
<keyword id="KW-0393">Immunoglobulin domain</keyword>
<keyword id="KW-0399">Innate immunity</keyword>
<keyword id="KW-0472">Membrane</keyword>
<keyword id="KW-0597">Phosphoprotein</keyword>
<keyword id="KW-0675">Receptor</keyword>
<keyword id="KW-1185">Reference proteome</keyword>
<keyword id="KW-0732">Signal</keyword>
<keyword id="KW-0812">Transmembrane</keyword>
<keyword id="KW-1133">Transmembrane helix</keyword>
<dbReference type="EMBL" id="AF248635">
    <property type="protein sequence ID" value="AAG01737.1"/>
    <property type="molecule type" value="mRNA"/>
</dbReference>
<dbReference type="EMBL" id="AF248636">
    <property type="protein sequence ID" value="AAG01738.1"/>
    <property type="molecule type" value="mRNA"/>
</dbReference>
<dbReference type="EMBL" id="EU591721">
    <property type="protein sequence ID" value="ACF05482.1"/>
    <property type="molecule type" value="mRNA"/>
</dbReference>
<dbReference type="EMBL" id="AC091523">
    <property type="status" value="NOT_ANNOTATED_CDS"/>
    <property type="molecule type" value="Genomic_DNA"/>
</dbReference>
<dbReference type="EMBL" id="BC030031">
    <property type="protein sequence ID" value="AAH30031.1"/>
    <property type="molecule type" value="mRNA"/>
</dbReference>
<dbReference type="CCDS" id="CCDS15504.1">
    <molecule id="Q9ET39-2"/>
</dbReference>
<dbReference type="CCDS" id="CCDS83638.1">
    <molecule id="Q9ET39-1"/>
</dbReference>
<dbReference type="CCDS" id="CCDS83639.1">
    <molecule id="Q9ET39-3"/>
</dbReference>
<dbReference type="RefSeq" id="NP_001334115.1">
    <molecule id="Q9ET39-1"/>
    <property type="nucleotide sequence ID" value="NM_001347186.1"/>
</dbReference>
<dbReference type="RefSeq" id="NP_001334116.1">
    <molecule id="Q9ET39-3"/>
    <property type="nucleotide sequence ID" value="NM_001347187.1"/>
</dbReference>
<dbReference type="RefSeq" id="NP_109635.1">
    <molecule id="Q9ET39-2"/>
    <property type="nucleotide sequence ID" value="NM_030710.3"/>
</dbReference>
<dbReference type="SMR" id="Q9ET39"/>
<dbReference type="FunCoup" id="Q9ET39">
    <property type="interactions" value="1035"/>
</dbReference>
<dbReference type="STRING" id="10090.ENSMUSP00000141448"/>
<dbReference type="TCDB" id="8.A.23.1.32">
    <property type="family name" value="the basigin (basigin) family"/>
</dbReference>
<dbReference type="GlyCosmos" id="Q9ET39">
    <property type="glycosylation" value="9 sites, No reported glycans"/>
</dbReference>
<dbReference type="GlyGen" id="Q9ET39">
    <property type="glycosylation" value="9 sites"/>
</dbReference>
<dbReference type="iPTMnet" id="Q9ET39"/>
<dbReference type="PhosphoSitePlus" id="Q9ET39"/>
<dbReference type="PaxDb" id="10090-ENSMUSP00000130610"/>
<dbReference type="ProteomicsDB" id="261409">
    <molecule id="Q9ET39-1"/>
</dbReference>
<dbReference type="ProteomicsDB" id="261410">
    <molecule id="Q9ET39-2"/>
</dbReference>
<dbReference type="ProteomicsDB" id="261411">
    <molecule id="Q9ET39-3"/>
</dbReference>
<dbReference type="ABCD" id="Q9ET39">
    <property type="antibodies" value="3 sequenced antibodies"/>
</dbReference>
<dbReference type="Antibodypedia" id="34279">
    <property type="antibodies" value="501 antibodies from 34 providers"/>
</dbReference>
<dbReference type="DNASU" id="30925"/>
<dbReference type="Ensembl" id="ENSMUST00000171330.7">
    <molecule id="Q9ET39-2"/>
    <property type="protein sequence ID" value="ENSMUSP00000130610.2"/>
    <property type="gene ID" value="ENSMUSG00000015314.11"/>
</dbReference>
<dbReference type="Ensembl" id="ENSMUST00000194561.2">
    <molecule id="Q9ET39-3"/>
    <property type="protein sequence ID" value="ENSMUSP00000141944.2"/>
    <property type="gene ID" value="ENSMUSG00000015314.11"/>
</dbReference>
<dbReference type="Ensembl" id="ENSMUST00000195656.6">
    <molecule id="Q9ET39-1"/>
    <property type="protein sequence ID" value="ENSMUSP00000141448.2"/>
    <property type="gene ID" value="ENSMUSG00000015314.11"/>
</dbReference>
<dbReference type="GeneID" id="30925"/>
<dbReference type="KEGG" id="mmu:30925"/>
<dbReference type="UCSC" id="uc007dph.1">
    <molecule id="Q9ET39-1"/>
    <property type="organism name" value="mouse"/>
</dbReference>
<dbReference type="UCSC" id="uc011wwh.1">
    <property type="organism name" value="mouse"/>
</dbReference>
<dbReference type="AGR" id="MGI:1353620"/>
<dbReference type="CTD" id="114836"/>
<dbReference type="MGI" id="MGI:1353620">
    <property type="gene designation" value="Slamf6"/>
</dbReference>
<dbReference type="VEuPathDB" id="HostDB:ENSMUSG00000015314"/>
<dbReference type="eggNOG" id="ENOG502SSRG">
    <property type="taxonomic scope" value="Eukaryota"/>
</dbReference>
<dbReference type="GeneTree" id="ENSGT01030000234540"/>
<dbReference type="HOGENOM" id="CLU_069386_2_0_1"/>
<dbReference type="InParanoid" id="Q9ET39"/>
<dbReference type="OMA" id="HVTHPKQ"/>
<dbReference type="OrthoDB" id="8963224at2759"/>
<dbReference type="PhylomeDB" id="Q9ET39"/>
<dbReference type="TreeFam" id="TF334964"/>
<dbReference type="Reactome" id="R-MMU-198933">
    <property type="pathway name" value="Immunoregulatory interactions between a Lymphoid and a non-Lymphoid cell"/>
</dbReference>
<dbReference type="BioGRID-ORCS" id="30925">
    <property type="hits" value="2 hits in 77 CRISPR screens"/>
</dbReference>
<dbReference type="ChiTaRS" id="Slamf6">
    <property type="organism name" value="mouse"/>
</dbReference>
<dbReference type="PRO" id="PR:Q9ET39"/>
<dbReference type="Proteomes" id="UP000000589">
    <property type="component" value="Chromosome 1"/>
</dbReference>
<dbReference type="RNAct" id="Q9ET39">
    <property type="molecule type" value="protein"/>
</dbReference>
<dbReference type="Bgee" id="ENSMUSG00000015314">
    <property type="expression patterns" value="Expressed in thymus and 39 other cell types or tissues"/>
</dbReference>
<dbReference type="ExpressionAtlas" id="Q9ET39">
    <property type="expression patterns" value="baseline and differential"/>
</dbReference>
<dbReference type="GO" id="GO:0005886">
    <property type="term" value="C:plasma membrane"/>
    <property type="evidence" value="ECO:0000250"/>
    <property type="project" value="MGI"/>
</dbReference>
<dbReference type="GO" id="GO:0002250">
    <property type="term" value="P:adaptive immune response"/>
    <property type="evidence" value="ECO:0007669"/>
    <property type="project" value="UniProtKB-KW"/>
</dbReference>
<dbReference type="GO" id="GO:0045087">
    <property type="term" value="P:innate immune response"/>
    <property type="evidence" value="ECO:0007669"/>
    <property type="project" value="UniProtKB-KW"/>
</dbReference>
<dbReference type="GO" id="GO:0001779">
    <property type="term" value="P:natural killer cell differentiation"/>
    <property type="evidence" value="ECO:0000315"/>
    <property type="project" value="UniProtKB"/>
</dbReference>
<dbReference type="GO" id="GO:0001787">
    <property type="term" value="P:natural killer cell proliferation"/>
    <property type="evidence" value="ECO:0000315"/>
    <property type="project" value="UniProtKB"/>
</dbReference>
<dbReference type="FunFam" id="2.60.40.10:FF:000820">
    <property type="entry name" value="SLAM family member 7"/>
    <property type="match status" value="1"/>
</dbReference>
<dbReference type="Gene3D" id="2.60.40.10">
    <property type="entry name" value="Immunoglobulins"/>
    <property type="match status" value="2"/>
</dbReference>
<dbReference type="InterPro" id="IPR015631">
    <property type="entry name" value="CD2/SLAM_rcpt"/>
</dbReference>
<dbReference type="InterPro" id="IPR007110">
    <property type="entry name" value="Ig-like_dom"/>
</dbReference>
<dbReference type="InterPro" id="IPR036179">
    <property type="entry name" value="Ig-like_dom_sf"/>
</dbReference>
<dbReference type="InterPro" id="IPR013783">
    <property type="entry name" value="Ig-like_fold"/>
</dbReference>
<dbReference type="InterPro" id="IPR013106">
    <property type="entry name" value="Ig_V-set"/>
</dbReference>
<dbReference type="PANTHER" id="PTHR12080">
    <property type="entry name" value="SIGNALING LYMPHOCYTIC ACTIVATION MOLECULE"/>
    <property type="match status" value="1"/>
</dbReference>
<dbReference type="PANTHER" id="PTHR12080:SF16">
    <property type="entry name" value="SLAM FAMILY MEMBER 6"/>
    <property type="match status" value="1"/>
</dbReference>
<dbReference type="Pfam" id="PF07686">
    <property type="entry name" value="V-set"/>
    <property type="match status" value="1"/>
</dbReference>
<dbReference type="SUPFAM" id="SSF48726">
    <property type="entry name" value="Immunoglobulin"/>
    <property type="match status" value="1"/>
</dbReference>
<dbReference type="PROSITE" id="PS50835">
    <property type="entry name" value="IG_LIKE"/>
    <property type="match status" value="1"/>
</dbReference>
<gene>
    <name type="primary">Slamf6</name>
    <name type="synonym">Ly108</name>
</gene>
<reference key="1">
    <citation type="journal article" date="2000" name="Immunogenetics">
        <title>Ly108: a new member of the mouse CD2 family of cell surface proteins.</title>
        <authorList>
            <person name="Peck S.R."/>
            <person name="Ruley H.E."/>
        </authorList>
    </citation>
    <scope>NUCLEOTIDE SEQUENCE [MRNA] (ISOFORMS 1 AND 2)</scope>
    <source>
        <strain>C57BL/6J</strain>
        <tissue>Spleen</tissue>
    </source>
</reference>
<reference key="2">
    <citation type="journal article" date="2011" name="J. Exp. Med.">
        <title>A novel isoform of the Ly108 gene ameliorates murine lupus.</title>
        <authorList>
            <person name="Keszei M."/>
            <person name="Detre C."/>
            <person name="Rietdijk S.T."/>
            <person name="Munoz P."/>
            <person name="Romero X."/>
            <person name="Berger S.B."/>
            <person name="Calpe S."/>
            <person name="Liao G."/>
            <person name="Castro W."/>
            <person name="Julien A."/>
            <person name="Wu Y.Y."/>
            <person name="Shin D.M."/>
            <person name="Sancho J."/>
            <person name="Zubiaur M."/>
            <person name="Morse H.C. III"/>
            <person name="Morel L."/>
            <person name="Engel P."/>
            <person name="Wang N."/>
            <person name="Terhorst C."/>
        </authorList>
    </citation>
    <scope>NUCLEOTIDE SEQUENCE [MRNA] (ISOFORM 3)</scope>
    <scope>FUNCTION</scope>
    <scope>ALTERNATIVE SPLICING</scope>
    <scope>TISSUE SPECIFICITY</scope>
    <scope>INVOLVEMENT IN SYSTEMIC LUPUS ERYTHEMATOSUS</scope>
</reference>
<reference key="3">
    <citation type="journal article" date="2009" name="PLoS Biol.">
        <title>Lineage-specific biology revealed by a finished genome assembly of the mouse.</title>
        <authorList>
            <person name="Church D.M."/>
            <person name="Goodstadt L."/>
            <person name="Hillier L.W."/>
            <person name="Zody M.C."/>
            <person name="Goldstein S."/>
            <person name="She X."/>
            <person name="Bult C.J."/>
            <person name="Agarwala R."/>
            <person name="Cherry J.L."/>
            <person name="DiCuccio M."/>
            <person name="Hlavina W."/>
            <person name="Kapustin Y."/>
            <person name="Meric P."/>
            <person name="Maglott D."/>
            <person name="Birtle Z."/>
            <person name="Marques A.C."/>
            <person name="Graves T."/>
            <person name="Zhou S."/>
            <person name="Teague B."/>
            <person name="Potamousis K."/>
            <person name="Churas C."/>
            <person name="Place M."/>
            <person name="Herschleb J."/>
            <person name="Runnheim R."/>
            <person name="Forrest D."/>
            <person name="Amos-Landgraf J."/>
            <person name="Schwartz D.C."/>
            <person name="Cheng Z."/>
            <person name="Lindblad-Toh K."/>
            <person name="Eichler E.E."/>
            <person name="Ponting C.P."/>
        </authorList>
    </citation>
    <scope>NUCLEOTIDE SEQUENCE [LARGE SCALE GENOMIC DNA]</scope>
    <source>
        <strain>C57BL/6J</strain>
    </source>
</reference>
<reference key="4">
    <citation type="journal article" date="2004" name="Genome Res.">
        <title>The status, quality, and expansion of the NIH full-length cDNA project: the Mammalian Gene Collection (MGC).</title>
        <authorList>
            <consortium name="The MGC Project Team"/>
        </authorList>
    </citation>
    <scope>NUCLEOTIDE SEQUENCE [LARGE SCALE MRNA] (ISOFORM 1)</scope>
    <source>
        <tissue>Thymus</tissue>
    </source>
</reference>
<reference key="5">
    <citation type="journal article" date="2007" name="Immunity">
        <title>Homotypic interactions mediated by Slamf1 and Slamf6 receptors control NKT cell lineage development.</title>
        <authorList>
            <person name="Griewank K."/>
            <person name="Borowski C."/>
            <person name="Rietdijk S."/>
            <person name="Wang N."/>
            <person name="Julien A."/>
            <person name="Wei D.G."/>
            <person name="Mamchak A.A."/>
            <person name="Terhorst C."/>
            <person name="Bendelac A."/>
        </authorList>
    </citation>
    <scope>FUNCTION</scope>
</reference>
<reference key="6">
    <citation type="journal article" date="2009" name="Nat. Immunol.">
        <title>Essential function for SAP family adaptors in the surveillance of hematopoietic cells by natural killer cells.</title>
        <authorList>
            <person name="Dong Z."/>
            <person name="Cruz-Munoz M.E."/>
            <person name="Zhong M.C."/>
            <person name="Chen R."/>
            <person name="Latour S."/>
            <person name="Veillette A."/>
        </authorList>
    </citation>
    <scope>FUNCTION</scope>
</reference>
<reference key="7">
    <citation type="journal article" date="2010" name="Cell">
        <title>A tissue-specific atlas of mouse protein phosphorylation and expression.</title>
        <authorList>
            <person name="Huttlin E.L."/>
            <person name="Jedrychowski M.P."/>
            <person name="Elias J.E."/>
            <person name="Goswami T."/>
            <person name="Rad R."/>
            <person name="Beausoleil S.A."/>
            <person name="Villen J."/>
            <person name="Haas W."/>
            <person name="Sowa M.E."/>
            <person name="Gygi S.P."/>
        </authorList>
    </citation>
    <scope>IDENTIFICATION BY MASS SPECTROMETRY [LARGE SCALE ANALYSIS]</scope>
    <source>
        <tissue>Lung</tissue>
    </source>
</reference>
<reference key="8">
    <citation type="journal article" date="2010" name="Immunity">
        <title>Optimal germinal center responses require a multistage T cell:B cell adhesion process involving integrins, SLAM-associated protein, and CD84.</title>
        <authorList>
            <person name="Cannons J.L."/>
            <person name="Qi H."/>
            <person name="Lu K.T."/>
            <person name="Dutta M."/>
            <person name="Gomez-Rodriguez J."/>
            <person name="Cheng J."/>
            <person name="Wakeland E.K."/>
            <person name="Germain R.N."/>
            <person name="Schwartzberg P.L."/>
        </authorList>
    </citation>
    <scope>FUNCTION</scope>
</reference>
<reference key="9">
    <citation type="journal article" date="2012" name="Immunity">
        <title>The receptor Ly108 functions as a SAP adaptor-dependent on-off switch for T cell help to B cells and NKT cell development.</title>
        <authorList>
            <person name="Kageyama R."/>
            <person name="Cannons J.L."/>
            <person name="Zhao F."/>
            <person name="Yusuf I."/>
            <person name="Lao C."/>
            <person name="Locci M."/>
            <person name="Schwartzberg P.L."/>
            <person name="Crotty S."/>
        </authorList>
    </citation>
    <scope>FUNCTION</scope>
    <scope>MUTAGENESIS OF TYR-295; TYR-319; TYR-335 AND TYR-349</scope>
</reference>
<reference key="10">
    <citation type="journal article" date="2015" name="Front. Immunol.">
        <title>Negative regulation of humoral immunity due to interplay between the SLAMF1, SLAMF5, and SLAMF6 receptors.</title>
        <authorList>
            <person name="Wang N."/>
            <person name="Halibozek P.J."/>
            <person name="Yigit B."/>
            <person name="Zhao H."/>
            <person name="O'Keeffe M.S."/>
            <person name="Sage P."/>
            <person name="Sharpe A."/>
            <person name="Terhorst C."/>
        </authorList>
    </citation>
    <scope>FUNCTION</scope>
</reference>
<reference key="11">
    <citation type="journal article" date="2015" name="J. Immunol.">
        <title>B cell-intrinsic CD84 and Ly108 maintain germinal center B cell tolerance.</title>
        <authorList>
            <person name="Wong E.B."/>
            <person name="Soni C."/>
            <person name="Chan A.Y."/>
            <person name="Domeier P.P."/>
            <person name="Shwetank V."/>
            <person name="Abraham T."/>
            <person name="Limaye N."/>
            <person name="Khan T.N."/>
            <person name="Elias M.J."/>
            <person name="Chodisetti S.B."/>
            <person name="Wakeland E.K."/>
            <person name="Rahman Z.S."/>
        </authorList>
    </citation>
    <scope>FUNCTION</scope>
</reference>
<protein>
    <recommendedName>
        <fullName>SLAM family member 6</fullName>
    </recommendedName>
    <alternativeName>
        <fullName>Lymphocyte antigen 108</fullName>
    </alternativeName>
    <cdAntigenName>CD352</cdAntigenName>
</protein>
<organism>
    <name type="scientific">Mus musculus</name>
    <name type="common">Mouse</name>
    <dbReference type="NCBI Taxonomy" id="10090"/>
    <lineage>
        <taxon>Eukaryota</taxon>
        <taxon>Metazoa</taxon>
        <taxon>Chordata</taxon>
        <taxon>Craniata</taxon>
        <taxon>Vertebrata</taxon>
        <taxon>Euteleostomi</taxon>
        <taxon>Mammalia</taxon>
        <taxon>Eutheria</taxon>
        <taxon>Euarchontoglires</taxon>
        <taxon>Glires</taxon>
        <taxon>Rodentia</taxon>
        <taxon>Myomorpha</taxon>
        <taxon>Muroidea</taxon>
        <taxon>Muridae</taxon>
        <taxon>Murinae</taxon>
        <taxon>Mus</taxon>
        <taxon>Mus</taxon>
    </lineage>
</organism>
<accession>Q9ET39</accession>
<accession>C6ESQ1</accession>
<accession>Q9ET40</accession>
<proteinExistence type="evidence at protein level"/>
<sequence length="351" mass="38638">MAVSRAPAPDSACQRMVWLFPLVFCLGSGSEVSQSSSDPQLMNGVLGESAVLPLKLPAGKIANIIIWNYEWEASQVTALVINLSNPESPQIMNTDVKKRLNITQSYSLQISNLTMADTGSYTAQITTKDSEVITFKYILRVFERLGNLETTNYTLLLENGTCQIHLACVLKNQSQTVSVEWQATGNISLGGPNVTIFWDPRNSGDQTYVCRAKNAVSNLSVSVSTQSLCKGVLTNPPWNAVWFMTTISIISAVILIFVCWSIHVWKRRGSLPLTSQHPESSQSTDGPGSPGNTVYAQVTRPMQEMKIPKPIKNDSMTIYSIVNHSREETVALTGYNQPITLKVNTLINYNS</sequence>